<proteinExistence type="inferred from homology"/>
<accession>Q87BZ9</accession>
<protein>
    <recommendedName>
        <fullName evidence="1">Putative manganese efflux pump MntP</fullName>
    </recommendedName>
</protein>
<organism>
    <name type="scientific">Xylella fastidiosa (strain Temecula1 / ATCC 700964)</name>
    <dbReference type="NCBI Taxonomy" id="183190"/>
    <lineage>
        <taxon>Bacteria</taxon>
        <taxon>Pseudomonadati</taxon>
        <taxon>Pseudomonadota</taxon>
        <taxon>Gammaproteobacteria</taxon>
        <taxon>Lysobacterales</taxon>
        <taxon>Lysobacteraceae</taxon>
        <taxon>Xylella</taxon>
    </lineage>
</organism>
<sequence length="194" mass="20175">MSPITTLLIGIAMSTDAFAAAIGKGAAIGKPRLRDALYVAVIFGVIETATPIAGWLLGQVASHYIATFDHWIAFGLLGGLGIHMIVNGLKNNGNTCKDNADTHNRNSRWLTLAATALATSIDAAAIGISMAFLDIHIGIVAAVIGLCTFTMVIFGVMLGRVLGTFVGNRAEIVGGIILIIVGSTILYEHLSNTG</sequence>
<evidence type="ECO:0000255" key="1">
    <source>
        <dbReference type="HAMAP-Rule" id="MF_01521"/>
    </source>
</evidence>
<evidence type="ECO:0000305" key="2"/>
<name>MNTP_XYLFT</name>
<keyword id="KW-0997">Cell inner membrane</keyword>
<keyword id="KW-1003">Cell membrane</keyword>
<keyword id="KW-0406">Ion transport</keyword>
<keyword id="KW-0464">Manganese</keyword>
<keyword id="KW-0472">Membrane</keyword>
<keyword id="KW-1185">Reference proteome</keyword>
<keyword id="KW-0812">Transmembrane</keyword>
<keyword id="KW-1133">Transmembrane helix</keyword>
<keyword id="KW-0813">Transport</keyword>
<comment type="function">
    <text evidence="1">Probably functions as a manganese efflux pump.</text>
</comment>
<comment type="subcellular location">
    <subcellularLocation>
        <location evidence="1">Cell inner membrane</location>
        <topology evidence="1">Multi-pass membrane protein</topology>
    </subcellularLocation>
</comment>
<comment type="similarity">
    <text evidence="1">Belongs to the MntP (TC 9.B.29) family.</text>
</comment>
<comment type="sequence caution" evidence="2">
    <conflict type="erroneous initiation">
        <sequence resource="EMBL-CDS" id="AAO29146"/>
    </conflict>
</comment>
<feature type="chain" id="PRO_0000155674" description="Putative manganese efflux pump MntP">
    <location>
        <begin position="1"/>
        <end position="194"/>
    </location>
</feature>
<feature type="transmembrane region" description="Helical" evidence="1">
    <location>
        <begin position="3"/>
        <end position="23"/>
    </location>
</feature>
<feature type="transmembrane region" description="Helical" evidence="1">
    <location>
        <begin position="37"/>
        <end position="57"/>
    </location>
</feature>
<feature type="transmembrane region" description="Helical" evidence="1">
    <location>
        <begin position="65"/>
        <end position="85"/>
    </location>
</feature>
<feature type="transmembrane region" description="Helical" evidence="1">
    <location>
        <begin position="112"/>
        <end position="132"/>
    </location>
</feature>
<feature type="transmembrane region" description="Helical" evidence="1">
    <location>
        <begin position="137"/>
        <end position="157"/>
    </location>
</feature>
<feature type="transmembrane region" description="Helical" evidence="1">
    <location>
        <begin position="170"/>
        <end position="190"/>
    </location>
</feature>
<gene>
    <name evidence="1" type="primary">mntP</name>
    <name type="ordered locus">PD_1297</name>
</gene>
<reference key="1">
    <citation type="journal article" date="2003" name="J. Bacteriol.">
        <title>Comparative analyses of the complete genome sequences of Pierce's disease and citrus variegated chlorosis strains of Xylella fastidiosa.</title>
        <authorList>
            <person name="Van Sluys M.A."/>
            <person name="de Oliveira M.C."/>
            <person name="Monteiro-Vitorello C.B."/>
            <person name="Miyaki C.Y."/>
            <person name="Furlan L.R."/>
            <person name="Camargo L.E.A."/>
            <person name="da Silva A.C.R."/>
            <person name="Moon D.H."/>
            <person name="Takita M.A."/>
            <person name="Lemos E.G.M."/>
            <person name="Machado M.A."/>
            <person name="Ferro M.I.T."/>
            <person name="da Silva F.R."/>
            <person name="Goldman M.H.S."/>
            <person name="Goldman G.H."/>
            <person name="Lemos M.V.F."/>
            <person name="El-Dorry H."/>
            <person name="Tsai S.M."/>
            <person name="Carrer H."/>
            <person name="Carraro D.M."/>
            <person name="de Oliveira R.C."/>
            <person name="Nunes L.R."/>
            <person name="Siqueira W.J."/>
            <person name="Coutinho L.L."/>
            <person name="Kimura E.T."/>
            <person name="Ferro E.S."/>
            <person name="Harakava R."/>
            <person name="Kuramae E.E."/>
            <person name="Marino C.L."/>
            <person name="Giglioti E."/>
            <person name="Abreu I.L."/>
            <person name="Alves L.M.C."/>
            <person name="do Amaral A.M."/>
            <person name="Baia G.S."/>
            <person name="Blanco S.R."/>
            <person name="Brito M.S."/>
            <person name="Cannavan F.S."/>
            <person name="Celestino A.V."/>
            <person name="da Cunha A.F."/>
            <person name="Fenille R.C."/>
            <person name="Ferro J.A."/>
            <person name="Formighieri E.F."/>
            <person name="Kishi L.T."/>
            <person name="Leoni S.G."/>
            <person name="Oliveira A.R."/>
            <person name="Rosa V.E. Jr."/>
            <person name="Sassaki F.T."/>
            <person name="Sena J.A.D."/>
            <person name="de Souza A.A."/>
            <person name="Truffi D."/>
            <person name="Tsukumo F."/>
            <person name="Yanai G.M."/>
            <person name="Zaros L.G."/>
            <person name="Civerolo E.L."/>
            <person name="Simpson A.J.G."/>
            <person name="Almeida N.F. Jr."/>
            <person name="Setubal J.C."/>
            <person name="Kitajima J.P."/>
        </authorList>
    </citation>
    <scope>NUCLEOTIDE SEQUENCE [LARGE SCALE GENOMIC DNA]</scope>
    <source>
        <strain>Temecula1 / ATCC 700964</strain>
    </source>
</reference>
<dbReference type="EMBL" id="AE009442">
    <property type="protein sequence ID" value="AAO29146.1"/>
    <property type="status" value="ALT_INIT"/>
    <property type="molecule type" value="Genomic_DNA"/>
</dbReference>
<dbReference type="RefSeq" id="WP_004088284.1">
    <property type="nucleotide sequence ID" value="NC_004556.1"/>
</dbReference>
<dbReference type="KEGG" id="xft:PD_1297"/>
<dbReference type="HOGENOM" id="CLU_096410_0_0_6"/>
<dbReference type="Proteomes" id="UP000002516">
    <property type="component" value="Chromosome"/>
</dbReference>
<dbReference type="GO" id="GO:0005886">
    <property type="term" value="C:plasma membrane"/>
    <property type="evidence" value="ECO:0007669"/>
    <property type="project" value="UniProtKB-SubCell"/>
</dbReference>
<dbReference type="GO" id="GO:0005384">
    <property type="term" value="F:manganese ion transmembrane transporter activity"/>
    <property type="evidence" value="ECO:0007669"/>
    <property type="project" value="UniProtKB-UniRule"/>
</dbReference>
<dbReference type="HAMAP" id="MF_01521">
    <property type="entry name" value="MntP_pump"/>
    <property type="match status" value="1"/>
</dbReference>
<dbReference type="InterPro" id="IPR003810">
    <property type="entry name" value="Mntp/YtaF"/>
</dbReference>
<dbReference type="InterPro" id="IPR022929">
    <property type="entry name" value="Put_MntP"/>
</dbReference>
<dbReference type="PANTHER" id="PTHR35529">
    <property type="entry name" value="MANGANESE EFFLUX PUMP MNTP-RELATED"/>
    <property type="match status" value="1"/>
</dbReference>
<dbReference type="PANTHER" id="PTHR35529:SF1">
    <property type="entry name" value="MANGANESE EFFLUX PUMP MNTP-RELATED"/>
    <property type="match status" value="1"/>
</dbReference>
<dbReference type="Pfam" id="PF02659">
    <property type="entry name" value="Mntp"/>
    <property type="match status" value="1"/>
</dbReference>